<dbReference type="EMBL" id="L39835">
    <property type="protein sequence ID" value="AAB50166.1"/>
    <property type="molecule type" value="Genomic_DNA"/>
</dbReference>
<dbReference type="EMBL" id="AE014297">
    <property type="protein sequence ID" value="AAF55829.1"/>
    <property type="molecule type" value="Genomic_DNA"/>
</dbReference>
<dbReference type="EMBL" id="AE014297">
    <property type="protein sequence ID" value="AAN13844.1"/>
    <property type="molecule type" value="Genomic_DNA"/>
</dbReference>
<dbReference type="EMBL" id="AE014297">
    <property type="protein sequence ID" value="AAN13845.1"/>
    <property type="molecule type" value="Genomic_DNA"/>
</dbReference>
<dbReference type="EMBL" id="AE014297">
    <property type="protein sequence ID" value="AFH06530.1"/>
    <property type="molecule type" value="Genomic_DNA"/>
</dbReference>
<dbReference type="EMBL" id="AY118680">
    <property type="protein sequence ID" value="AAM50540.1"/>
    <property type="molecule type" value="mRNA"/>
</dbReference>
<dbReference type="EMBL" id="BT011420">
    <property type="protein sequence ID" value="AAR96212.1"/>
    <property type="molecule type" value="mRNA"/>
</dbReference>
<dbReference type="RefSeq" id="NP_001247212.1">
    <molecule id="Q9VDG5-2"/>
    <property type="nucleotide sequence ID" value="NM_001260283.2"/>
</dbReference>
<dbReference type="RefSeq" id="NP_524423.2">
    <molecule id="Q9VDG5-1"/>
    <property type="nucleotide sequence ID" value="NM_079699.4"/>
</dbReference>
<dbReference type="RefSeq" id="NP_732576.1">
    <molecule id="Q9VDG5-1"/>
    <property type="nucleotide sequence ID" value="NM_169940.4"/>
</dbReference>
<dbReference type="RefSeq" id="NP_732577.1">
    <molecule id="Q9VDG5-1"/>
    <property type="nucleotide sequence ID" value="NM_169941.2"/>
</dbReference>
<dbReference type="PDB" id="3E9T">
    <property type="method" value="X-ray"/>
    <property type="resolution" value="1.60 A"/>
    <property type="chains" value="A/B/C/D=442-553"/>
</dbReference>
<dbReference type="PDB" id="3E9U">
    <property type="method" value="X-ray"/>
    <property type="resolution" value="2.50 A"/>
    <property type="chains" value="A=555-709"/>
</dbReference>
<dbReference type="PDB" id="3EAD">
    <property type="method" value="X-ray"/>
    <property type="resolution" value="2.25 A"/>
    <property type="chains" value="A/B/C/D=438-574"/>
</dbReference>
<dbReference type="PDB" id="3RB5">
    <property type="method" value="X-ray"/>
    <property type="resolution" value="2.35 A"/>
    <property type="chains" value="A/B=433-730"/>
</dbReference>
<dbReference type="PDB" id="3RB7">
    <property type="method" value="X-ray"/>
    <property type="resolution" value="2.90 A"/>
    <property type="chains" value="A/B/E/G=433-730"/>
</dbReference>
<dbReference type="PDBsum" id="3E9T"/>
<dbReference type="PDBsum" id="3E9U"/>
<dbReference type="PDBsum" id="3EAD"/>
<dbReference type="PDBsum" id="3RB5"/>
<dbReference type="PDBsum" id="3RB7"/>
<dbReference type="SASBDB" id="Q9VDG5"/>
<dbReference type="SMR" id="Q9VDG5"/>
<dbReference type="IntAct" id="Q9VDG5">
    <property type="interactions" value="1"/>
</dbReference>
<dbReference type="GlyGen" id="Q9VDG5">
    <property type="glycosylation" value="4 sites"/>
</dbReference>
<dbReference type="DNASU" id="42481"/>
<dbReference type="EnsemblMetazoa" id="FBtr0083998">
    <molecule id="Q9VDG5-1"/>
    <property type="protein sequence ID" value="FBpp0083402"/>
    <property type="gene ID" value="FBgn0013995"/>
</dbReference>
<dbReference type="EnsemblMetazoa" id="FBtr0083999">
    <molecule id="Q9VDG5-1"/>
    <property type="protein sequence ID" value="FBpp0083403"/>
    <property type="gene ID" value="FBgn0013995"/>
</dbReference>
<dbReference type="EnsemblMetazoa" id="FBtr0084000">
    <molecule id="Q9VDG5-1"/>
    <property type="protein sequence ID" value="FBpp0083404"/>
    <property type="gene ID" value="FBgn0013995"/>
</dbReference>
<dbReference type="EnsemblMetazoa" id="FBtr0309202">
    <molecule id="Q9VDG5-2"/>
    <property type="protein sequence ID" value="FBpp0301141"/>
    <property type="gene ID" value="FBgn0013995"/>
</dbReference>
<dbReference type="GeneID" id="42481"/>
<dbReference type="KEGG" id="dme:Dmel_CG5685"/>
<dbReference type="UCSC" id="CG5685-RA">
    <molecule id="Q9VDG5-1"/>
    <property type="organism name" value="d. melanogaster"/>
</dbReference>
<dbReference type="AGR" id="FB:FBgn0013995"/>
<dbReference type="CTD" id="42481"/>
<dbReference type="FlyBase" id="FBgn0013995">
    <property type="gene designation" value="Calx"/>
</dbReference>
<dbReference type="VEuPathDB" id="VectorBase:FBgn0013995"/>
<dbReference type="GeneTree" id="ENSGT00940000164137"/>
<dbReference type="OrthoDB" id="418484at2759"/>
<dbReference type="BioGRID-ORCS" id="42481">
    <property type="hits" value="0 hits in 3 CRISPR screens"/>
</dbReference>
<dbReference type="EvolutionaryTrace" id="Q9VDG5"/>
<dbReference type="GenomeRNAi" id="42481"/>
<dbReference type="PRO" id="PR:Q9VDG5"/>
<dbReference type="Proteomes" id="UP000000803">
    <property type="component" value="Chromosome 3R"/>
</dbReference>
<dbReference type="Bgee" id="FBgn0013995">
    <property type="expression patterns" value="Expressed in proximal medullary amacrine neuron Pm2 (Drosophila) in insect head and 262 other cell types or tissues"/>
</dbReference>
<dbReference type="ExpressionAtlas" id="Q9VDG5">
    <property type="expression patterns" value="baseline and differential"/>
</dbReference>
<dbReference type="GO" id="GO:0030424">
    <property type="term" value="C:axon"/>
    <property type="evidence" value="ECO:0000318"/>
    <property type="project" value="GO_Central"/>
</dbReference>
<dbReference type="GO" id="GO:0098794">
    <property type="term" value="C:postsynapse"/>
    <property type="evidence" value="ECO:0000318"/>
    <property type="project" value="GO_Central"/>
</dbReference>
<dbReference type="GO" id="GO:0033583">
    <property type="term" value="C:rhabdomere membrane"/>
    <property type="evidence" value="ECO:0007669"/>
    <property type="project" value="UniProtKB-SubCell"/>
</dbReference>
<dbReference type="GO" id="GO:0042383">
    <property type="term" value="C:sarcolemma"/>
    <property type="evidence" value="ECO:0000318"/>
    <property type="project" value="GO_Central"/>
</dbReference>
<dbReference type="GO" id="GO:0005509">
    <property type="term" value="F:calcium ion binding"/>
    <property type="evidence" value="ECO:0000314"/>
    <property type="project" value="FlyBase"/>
</dbReference>
<dbReference type="GO" id="GO:0005432">
    <property type="term" value="F:calcium:sodium antiporter activity"/>
    <property type="evidence" value="ECO:0000314"/>
    <property type="project" value="FlyBase"/>
</dbReference>
<dbReference type="GO" id="GO:0005516">
    <property type="term" value="F:calmodulin binding"/>
    <property type="evidence" value="ECO:0007669"/>
    <property type="project" value="UniProtKB-KW"/>
</dbReference>
<dbReference type="GO" id="GO:0098703">
    <property type="term" value="P:calcium ion import across plasma membrane"/>
    <property type="evidence" value="ECO:0000318"/>
    <property type="project" value="GO_Central"/>
</dbReference>
<dbReference type="GO" id="GO:0050884">
    <property type="term" value="P:neuromuscular process controlling posture"/>
    <property type="evidence" value="ECO:0000315"/>
    <property type="project" value="FlyBase"/>
</dbReference>
<dbReference type="GO" id="GO:0007602">
    <property type="term" value="P:phototransduction"/>
    <property type="evidence" value="ECO:0000315"/>
    <property type="project" value="FlyBase"/>
</dbReference>
<dbReference type="GO" id="GO:0034976">
    <property type="term" value="P:response to endoplasmic reticulum stress"/>
    <property type="evidence" value="ECO:0007001"/>
    <property type="project" value="FlyBase"/>
</dbReference>
<dbReference type="GO" id="GO:0035725">
    <property type="term" value="P:sodium ion transmembrane transport"/>
    <property type="evidence" value="ECO:0000318"/>
    <property type="project" value="GO_Central"/>
</dbReference>
<dbReference type="FunFam" id="2.60.40.2030:FF:000029">
    <property type="entry name" value="Na/Ca-exchange protein, isoform F"/>
    <property type="match status" value="1"/>
</dbReference>
<dbReference type="FunFam" id="1.20.1420.30:FF:000003">
    <property type="entry name" value="sodium/calcium exchanger 1 isoform X1"/>
    <property type="match status" value="1"/>
</dbReference>
<dbReference type="FunFam" id="2.60.40.2030:FF:000024">
    <property type="entry name" value="sodium/calcium exchanger 1-like"/>
    <property type="match status" value="1"/>
</dbReference>
<dbReference type="Gene3D" id="2.60.40.2030">
    <property type="match status" value="2"/>
</dbReference>
<dbReference type="Gene3D" id="1.20.1420.30">
    <property type="entry name" value="NCX, central ion-binding region"/>
    <property type="match status" value="2"/>
</dbReference>
<dbReference type="InterPro" id="IPR051171">
    <property type="entry name" value="CaCA"/>
</dbReference>
<dbReference type="InterPro" id="IPR038081">
    <property type="entry name" value="CalX-like_sf"/>
</dbReference>
<dbReference type="InterPro" id="IPR003644">
    <property type="entry name" value="Calx_beta"/>
</dbReference>
<dbReference type="InterPro" id="IPR004836">
    <property type="entry name" value="Na_Ca_Ex"/>
</dbReference>
<dbReference type="InterPro" id="IPR032452">
    <property type="entry name" value="Na_Ca_Ex_C-exten"/>
</dbReference>
<dbReference type="InterPro" id="IPR004837">
    <property type="entry name" value="NaCa_Exmemb"/>
</dbReference>
<dbReference type="InterPro" id="IPR044880">
    <property type="entry name" value="NCX_ion-bd_dom_sf"/>
</dbReference>
<dbReference type="NCBIfam" id="TIGR00845">
    <property type="entry name" value="caca"/>
    <property type="match status" value="1"/>
</dbReference>
<dbReference type="PANTHER" id="PTHR11878:SF65">
    <property type="entry name" value="NA_CA-EXCHANGE PROTEIN, ISOFORM G"/>
    <property type="match status" value="1"/>
</dbReference>
<dbReference type="PANTHER" id="PTHR11878">
    <property type="entry name" value="SODIUM/CALCIUM EXCHANGER"/>
    <property type="match status" value="1"/>
</dbReference>
<dbReference type="Pfam" id="PF03160">
    <property type="entry name" value="Calx-beta"/>
    <property type="match status" value="1"/>
</dbReference>
<dbReference type="Pfam" id="PF01699">
    <property type="entry name" value="Na_Ca_ex"/>
    <property type="match status" value="2"/>
</dbReference>
<dbReference type="Pfam" id="PF16494">
    <property type="entry name" value="Na_Ca_ex_C"/>
    <property type="match status" value="1"/>
</dbReference>
<dbReference type="PRINTS" id="PR01259">
    <property type="entry name" value="NACAEXCHNGR"/>
</dbReference>
<dbReference type="SMART" id="SM00237">
    <property type="entry name" value="Calx_beta"/>
    <property type="match status" value="2"/>
</dbReference>
<dbReference type="SUPFAM" id="SSF141072">
    <property type="entry name" value="CalX-like"/>
    <property type="match status" value="2"/>
</dbReference>
<evidence type="ECO:0000255" key="1"/>
<evidence type="ECO:0000255" key="2">
    <source>
        <dbReference type="PROSITE-ProRule" id="PRU00498"/>
    </source>
</evidence>
<evidence type="ECO:0000269" key="3">
    <source>
    </source>
</evidence>
<evidence type="ECO:0000269" key="4">
    <source>
    </source>
</evidence>
<evidence type="ECO:0000269" key="5">
    <source>
    </source>
</evidence>
<evidence type="ECO:0000269" key="6">
    <source>
    </source>
</evidence>
<evidence type="ECO:0000269" key="7">
    <source>
    </source>
</evidence>
<evidence type="ECO:0000269" key="8">
    <source>
    </source>
</evidence>
<evidence type="ECO:0000269" key="9">
    <source>
    </source>
</evidence>
<evidence type="ECO:0000269" key="10">
    <source>
    </source>
</evidence>
<evidence type="ECO:0000303" key="11">
    <source>
    </source>
</evidence>
<evidence type="ECO:0000303" key="12">
    <source>
    </source>
</evidence>
<evidence type="ECO:0000303" key="13">
    <source>
    </source>
</evidence>
<evidence type="ECO:0000303" key="14">
    <source>
    </source>
</evidence>
<evidence type="ECO:0000303" key="15">
    <source>
    </source>
</evidence>
<evidence type="ECO:0000305" key="16"/>
<evidence type="ECO:0000312" key="17">
    <source>
        <dbReference type="EMBL" id="AAB50166.1"/>
    </source>
</evidence>
<evidence type="ECO:0000312" key="18">
    <source>
        <dbReference type="EMBL" id="AAF55829.1"/>
    </source>
</evidence>
<evidence type="ECO:0000312" key="19">
    <source>
        <dbReference type="EMBL" id="AAM50540.1"/>
    </source>
</evidence>
<evidence type="ECO:0000312" key="20">
    <source>
        <dbReference type="EMBL" id="AAR96212.1"/>
    </source>
</evidence>
<evidence type="ECO:0000312" key="21">
    <source>
        <dbReference type="FlyBase" id="FBgn0013995"/>
    </source>
</evidence>
<evidence type="ECO:0000312" key="22">
    <source>
        <dbReference type="Proteomes" id="UP000000803"/>
    </source>
</evidence>
<evidence type="ECO:0007744" key="23">
    <source>
        <dbReference type="PDB" id="3E9T"/>
    </source>
</evidence>
<evidence type="ECO:0007744" key="24">
    <source>
        <dbReference type="PDB" id="3E9U"/>
    </source>
</evidence>
<evidence type="ECO:0007744" key="25">
    <source>
        <dbReference type="PDB" id="3EAD"/>
    </source>
</evidence>
<evidence type="ECO:0007744" key="26">
    <source>
        <dbReference type="PDB" id="3RB5"/>
    </source>
</evidence>
<evidence type="ECO:0007744" key="27">
    <source>
        <dbReference type="PDB" id="3RB7"/>
    </source>
</evidence>
<evidence type="ECO:0007829" key="28">
    <source>
        <dbReference type="PDB" id="3E9U"/>
    </source>
</evidence>
<evidence type="ECO:0007829" key="29">
    <source>
        <dbReference type="PDB" id="3RB5"/>
    </source>
</evidence>
<evidence type="ECO:0007829" key="30">
    <source>
        <dbReference type="PDB" id="3RB7"/>
    </source>
</evidence>
<organism evidence="22">
    <name type="scientific">Drosophila melanogaster</name>
    <name type="common">Fruit fly</name>
    <dbReference type="NCBI Taxonomy" id="7227"/>
    <lineage>
        <taxon>Eukaryota</taxon>
        <taxon>Metazoa</taxon>
        <taxon>Ecdysozoa</taxon>
        <taxon>Arthropoda</taxon>
        <taxon>Hexapoda</taxon>
        <taxon>Insecta</taxon>
        <taxon>Pterygota</taxon>
        <taxon>Neoptera</taxon>
        <taxon>Endopterygota</taxon>
        <taxon>Diptera</taxon>
        <taxon>Brachycera</taxon>
        <taxon>Muscomorpha</taxon>
        <taxon>Ephydroidea</taxon>
        <taxon>Drosophilidae</taxon>
        <taxon>Drosophila</taxon>
        <taxon>Sophophora</taxon>
    </lineage>
</organism>
<keyword id="KW-0002">3D-structure</keyword>
<keyword id="KW-0025">Alternative splicing</keyword>
<keyword id="KW-0050">Antiport</keyword>
<keyword id="KW-0106">Calcium</keyword>
<keyword id="KW-0109">Calcium transport</keyword>
<keyword id="KW-0112">Calmodulin-binding</keyword>
<keyword id="KW-1003">Cell membrane</keyword>
<keyword id="KW-0966">Cell projection</keyword>
<keyword id="KW-0325">Glycoprotein</keyword>
<keyword id="KW-0406">Ion transport</keyword>
<keyword id="KW-0472">Membrane</keyword>
<keyword id="KW-0479">Metal-binding</keyword>
<keyword id="KW-1185">Reference proteome</keyword>
<keyword id="KW-0677">Repeat</keyword>
<keyword id="KW-0732">Signal</keyword>
<keyword id="KW-0915">Sodium</keyword>
<keyword id="KW-0739">Sodium transport</keyword>
<keyword id="KW-0812">Transmembrane</keyword>
<keyword id="KW-1133">Transmembrane helix</keyword>
<keyword id="KW-0813">Transport</keyword>
<sequence>MQLLLKSIFTCALFVIFVYATAQSLLKVQETEARQAYLNVTSSSSSNLSQDDGHFLSRRLRQVSHGEEGDEGAPSQMDDELEQMTKVHGEAPDAEELRECSEGLVLPLWMPQRNISVGDRLVRGFVYFVLLIYLFVGVSIIADRFMAAIEAITSIERAVVVKGPNNTKQVMHVRIWNETVANLTLMALGSSAPEILLSVIEIYAKDFESGDLGPGTIVGSAAYNLFMIIAVCMIWIPAGEVRRIRHLRVFFVTALFSVFAYVWLWLILSVFTPGVILVWEAIVTLLFFPLTVLWAYIAERRLLVYKYMDKNYRVNKRGTVVAGEHDQVEMDAEKGPKQPMVTSARGNDAEAFDEARREYITLLTELRQKYPDADLEQLEMMAQEQVLARSSKSRAFYRIQATRKMVGSGNLMRKIQERAHSDLTEVKAQLHAGDDEEADDPIRMYFEPGHYTVMENCGEFEVRVVRRGDISTYASVEYETQDGTASAGTDFVGRKGLLSFPPGVDEQRFRIEVIDDDVFEEDECFYIRLFNPSEGVKLAVPMIATVMILDDDHAGIFAFTDSVFEITESVGRFELKVMRYSGARGTVIVPYWTENDTATESKDYEGARGELVFENNESEKFIDLFILEESSYEKDVSFKVHIGEPRLAPDDELAAKIKEVEKKPVQDLTELDRILLLSKPRNGELTTAYVRIRESQEFKATVDKLVAKANVSAVLGTSSWKEQFKDALTVIPADESEFDNDDEEEEVPSCFSYVSHFVCLFWKVLFAFVPPTDICGGYVTFVVSIFVIGVITAIIGDAASYFGCALNIKDSVTAILFVALGTSIPDTFASMIAAKHDEGADNCIGNVTGSNAVNVFLGIGLAWTIAAVYHSSHGMTFNVEPGTIGFAVALFCGEALIAIMLIMFRRWHKGIGAELGGPKVSKYISAAILVFLWVFYVVICILEAYDVIRV</sequence>
<name>NACX_DROME</name>
<comment type="function">
    <text evidence="3 7 8 11">Na(+)/Ca(2+) antiporter that couples the energy of a Na(+) electrochemical gradient to the movement of Ca(2+) against an electrochemical gradient across a membrane, which contributes to the regulation of cytoplasmic Ca(2+) levels (PubMed:8817385, PubMed:9252464). Mediates Na(+)/Ca(2+) exchange in photoreceptor cells and involved in controlling Ca(2+) levels during phototransduction, affecting magnitude of the photoresponse, activation kinetics, signal amplification, response termination, and light adaptation (PubMed:15694324). Light induced depolarization of photoreceptor cells, resulting in Na(+) and Ca(2+) entry through trp/transient receptor potential protein channels, is essential for photoreceptor cell function but may result in toxic levels of cytoplasmic Ca(2+) (PubMed:15694324). Na(+)/Ca(2+) antiporter regulation of Ca(2+) levels protects photoreceptor cells from light-dependent retinal degeneration (PubMed:15694324).</text>
</comment>
<comment type="catalytic activity">
    <reaction evidence="7 8 9">
        <text>Ca(2+)(in) + 3 Na(+)(out) = Ca(2+)(out) + 3 Na(+)(in)</text>
        <dbReference type="Rhea" id="RHEA:69955"/>
        <dbReference type="ChEBI" id="CHEBI:29101"/>
        <dbReference type="ChEBI" id="CHEBI:29108"/>
    </reaction>
</comment>
<comment type="activity regulation">
    <text evidence="5 7">Activated by a Na(+) electrochemical gradient but also undergoes Na(2+)-dependent inactivation (PubMed:19815561, PubMed:8817385). Inhibited by micromolar levels of cytoplasmic Ca(2+), which is the opposite of most characterized mammalian homologs (PubMed:19815561, PubMed:8817385).</text>
</comment>
<comment type="activity regulation">
    <molecule>Isoform A</molecule>
    <text evidence="10">Exhibits greater extent of inhibition by Ca(2+) than isoform D/1.2.</text>
</comment>
<comment type="activity regulation">
    <molecule>Isoform D</molecule>
    <text evidence="10">Exhibits greater Na(2+)-dependent inactivation than isoform A/1.1, probably due to greater stability of the inactive Na(2+)-bound form.</text>
</comment>
<comment type="subcellular location">
    <subcellularLocation>
        <location evidence="3 7 9">Cell membrane</location>
        <topology evidence="16">Multi-pass membrane protein</topology>
    </subcellularLocation>
    <subcellularLocation>
        <location evidence="3">Cell projection</location>
        <location evidence="3">Rhabdomere membrane</location>
        <topology evidence="16">Multi-pass membrane protein</topology>
    </subcellularLocation>
    <text evidence="3">Localizes to rhabdomeres in a pattern similar to trp/transient receptor potential protein.</text>
</comment>
<comment type="alternative products">
    <event type="alternative splicing"/>
    <isoform>
        <id>Q9VDG5-1</id>
        <name evidence="21">A</name>
        <name evidence="21">B</name>
        <name evidence="21">C</name>
        <name evidence="15">CALX1.1</name>
        <name evidence="11">CalX1</name>
        <name evidence="14">Dros-R</name>
        <sequence type="displayed"/>
    </isoform>
    <isoform>
        <id>Q9VDG5-2</id>
        <name evidence="21">D</name>
        <name evidence="15">CALX1.2</name>
        <name evidence="11">CalX2</name>
        <name evidence="14">Dros-S</name>
        <sequence type="described" ref="VSP_062036"/>
    </isoform>
    <text evidence="3 8 10 12">The Calx gene has the potential to express several isoforms by alternative splicing (PubMed:15694324, PubMed:9252464, PubMed:9565406). These differ in the sequence and length of a region just downstream of the Calx-beta 2 domain, the structure of which determines relative domain conformation and affects Ca(2+) regulatory behavior (PubMed:19361442).</text>
</comment>
<comment type="tissue specificity">
    <text evidence="3 9">Ubiquitously expressed with higher expression in head compared to body (at protein level) (PubMed:15694324). Enriched in photoreceptor cells of the eye (at protein level) (PubMed:15694324). In the adult head, expressed in retina, optic ganglia and all neuronal tissues (PubMed:9294196).</text>
</comment>
<comment type="developmental stage">
    <text evidence="3 9">Ubiquitously expressed at all stages of embryonic development and in the adult head and body (at protein level).</text>
</comment>
<comment type="domain">
    <text evidence="4 5 6 13">Contains 2 Calx-beta domains (PubMed:19361442, PubMed:19815561, PubMed:22000518). Calx-beta domain 1 binds two pairs of Ca(2+) ions (PubMed:19361442, PubMed:19815561). Binding of Ca(2+) induces a conformational shift that inhibits the Na(+)/Ca(2+) antiporter activity (PubMed:19815561). Calx-beta domain 2 does not bind Ca(2+) (PubMed:19361442). Calx-beta domain 2 contributes to the cooperative binding of Ca(2+) to Calx-beta domain 1 (PubMed:22000518).</text>
</comment>
<comment type="similarity">
    <text evidence="16">Belongs to the Ca(2+):cation antiporter (CaCA) (TC 2.A.19) family. SLC8 subfamily.</text>
</comment>
<feature type="signal peptide" evidence="1">
    <location>
        <begin position="1"/>
        <end position="22"/>
    </location>
</feature>
<feature type="chain" id="PRO_5015100147" description="Sodium/calcium exchanger Calx" evidence="1">
    <location>
        <begin position="23"/>
        <end position="950"/>
    </location>
</feature>
<feature type="topological domain" description="Extracellular" evidence="16">
    <location>
        <begin position="23"/>
        <end position="120"/>
    </location>
</feature>
<feature type="transmembrane region" description="Helical" evidence="1">
    <location>
        <begin position="121"/>
        <end position="141"/>
    </location>
</feature>
<feature type="topological domain" description="Cytoplasmic" evidence="16">
    <location>
        <begin position="142"/>
        <end position="179"/>
    </location>
</feature>
<feature type="transmembrane region" description="Helical" evidence="1">
    <location>
        <begin position="180"/>
        <end position="200"/>
    </location>
</feature>
<feature type="topological domain" description="Extracellular" evidence="16">
    <location>
        <begin position="201"/>
        <end position="216"/>
    </location>
</feature>
<feature type="transmembrane region" description="Helical" evidence="1">
    <location>
        <begin position="217"/>
        <end position="237"/>
    </location>
</feature>
<feature type="topological domain" description="Cytoplasmic" evidence="16">
    <location>
        <begin position="238"/>
        <end position="257"/>
    </location>
</feature>
<feature type="transmembrane region" description="Helical" evidence="1">
    <location>
        <begin position="258"/>
        <end position="278"/>
    </location>
</feature>
<feature type="transmembrane region" description="Helical" evidence="1">
    <location>
        <begin position="279"/>
        <end position="299"/>
    </location>
</feature>
<feature type="topological domain" description="Cytoplasmic" evidence="16">
    <location>
        <begin position="300"/>
        <end position="749"/>
    </location>
</feature>
<feature type="transmembrane region" description="Helical" evidence="1">
    <location>
        <begin position="750"/>
        <end position="770"/>
    </location>
</feature>
<feature type="topological domain" description="Extracellular" evidence="16">
    <location>
        <begin position="771"/>
        <end position="775"/>
    </location>
</feature>
<feature type="transmembrane region" description="Helical" evidence="1">
    <location>
        <begin position="776"/>
        <end position="796"/>
    </location>
</feature>
<feature type="topological domain" description="Cytoplasmic" evidence="16">
    <location>
        <begin position="797"/>
        <end position="813"/>
    </location>
</feature>
<feature type="transmembrane region" description="Helical" evidence="1">
    <location>
        <begin position="814"/>
        <end position="834"/>
    </location>
</feature>
<feature type="topological domain" description="Extracellular" evidence="16">
    <location>
        <begin position="835"/>
        <end position="848"/>
    </location>
</feature>
<feature type="transmembrane region" description="Helical" evidence="1">
    <location>
        <begin position="849"/>
        <end position="869"/>
    </location>
</feature>
<feature type="topological domain" description="Cytoplasmic" evidence="16">
    <location>
        <begin position="870"/>
        <end position="883"/>
    </location>
</feature>
<feature type="transmembrane region" description="Helical" evidence="1">
    <location>
        <begin position="884"/>
        <end position="904"/>
    </location>
</feature>
<feature type="topological domain" description="Extracellular" evidence="16">
    <location>
        <begin position="905"/>
        <end position="923"/>
    </location>
</feature>
<feature type="transmembrane region" description="Helical" evidence="1">
    <location>
        <begin position="924"/>
        <end position="944"/>
    </location>
</feature>
<feature type="topological domain" description="Cytoplasmic" evidence="16">
    <location>
        <begin position="945"/>
        <end position="950"/>
    </location>
</feature>
<feature type="domain" description="Calx-beta 1" evidence="5 6 23 25 26 27">
    <location>
        <begin position="440"/>
        <end position="551"/>
    </location>
</feature>
<feature type="domain" description="Calx-beta 2" evidence="4 6 24 26 27">
    <location>
        <begin position="555"/>
        <end position="694"/>
    </location>
</feature>
<feature type="region of interest" description="Corresponds to the exchanger inhibitory peptide (XIP) found in other sodium/calcium exchange proteins and thought to be involved in calmodulin binding" evidence="14">
    <location>
        <begin position="301"/>
        <end position="318"/>
    </location>
</feature>
<feature type="binding site" evidence="6 26 27">
    <location>
        <position position="455"/>
    </location>
    <ligand>
        <name>Ca(2+)</name>
        <dbReference type="ChEBI" id="CHEBI:29108"/>
        <label>1</label>
    </ligand>
</feature>
<feature type="binding site" evidence="5 6 23 25 26 27">
    <location>
        <position position="455"/>
    </location>
    <ligand>
        <name>Ca(2+)</name>
        <dbReference type="ChEBI" id="CHEBI:29108"/>
        <label>2</label>
    </ligand>
</feature>
<feature type="binding site" evidence="5 6 23 25 26 27">
    <location>
        <position position="455"/>
    </location>
    <ligand>
        <name>Ca(2+)</name>
        <dbReference type="ChEBI" id="CHEBI:29108"/>
        <label>3</label>
    </ligand>
</feature>
<feature type="binding site" evidence="5 6 23 25 26 27">
    <location>
        <position position="455"/>
    </location>
    <ligand>
        <name>Ca(2+)</name>
        <dbReference type="ChEBI" id="CHEBI:29108"/>
        <label>4</label>
    </ligand>
</feature>
<feature type="binding site" evidence="5 6 23 25 26 27">
    <location>
        <position position="490"/>
    </location>
    <ligand>
        <name>Ca(2+)</name>
        <dbReference type="ChEBI" id="CHEBI:29108"/>
        <label>1</label>
    </ligand>
</feature>
<feature type="binding site" evidence="5 6 23 25 26 27">
    <location>
        <position position="490"/>
    </location>
    <ligand>
        <name>Ca(2+)</name>
        <dbReference type="ChEBI" id="CHEBI:29108"/>
        <label>2</label>
    </ligand>
</feature>
<feature type="binding site" evidence="5 6 23 25 26 27">
    <location>
        <position position="515"/>
    </location>
    <ligand>
        <name>Ca(2+)</name>
        <dbReference type="ChEBI" id="CHEBI:29108"/>
        <label>3</label>
    </ligand>
</feature>
<feature type="binding site" evidence="5 6 23 25 26 27">
    <location>
        <position position="516"/>
    </location>
    <ligand>
        <name>Ca(2+)</name>
        <dbReference type="ChEBI" id="CHEBI:29108"/>
        <label>3</label>
    </ligand>
</feature>
<feature type="binding site" evidence="5 6 23 25 26 27">
    <location>
        <position position="516"/>
    </location>
    <ligand>
        <name>Ca(2+)</name>
        <dbReference type="ChEBI" id="CHEBI:29108"/>
        <label>4</label>
    </ligand>
</feature>
<feature type="binding site" evidence="5 6 23 25 26 27">
    <location>
        <position position="518"/>
    </location>
    <ligand>
        <name>Ca(2+)</name>
        <dbReference type="ChEBI" id="CHEBI:29108"/>
        <label>4</label>
    </ligand>
</feature>
<feature type="binding site" evidence="5 6 23 25 26 27">
    <location>
        <position position="520"/>
    </location>
    <ligand>
        <name>Ca(2+)</name>
        <dbReference type="ChEBI" id="CHEBI:29108"/>
        <label>1</label>
    </ligand>
</feature>
<feature type="binding site" evidence="5 6 23 25 26 27">
    <location>
        <position position="520"/>
    </location>
    <ligand>
        <name>Ca(2+)</name>
        <dbReference type="ChEBI" id="CHEBI:29108"/>
        <label>2</label>
    </ligand>
</feature>
<feature type="binding site" evidence="5 6 23 25 26 27">
    <location>
        <position position="520"/>
    </location>
    <ligand>
        <name>Ca(2+)</name>
        <dbReference type="ChEBI" id="CHEBI:29108"/>
        <label>4</label>
    </ligand>
</feature>
<feature type="binding site" evidence="5 6 23 25 26 27">
    <location>
        <position position="523"/>
    </location>
    <ligand>
        <name>Ca(2+)</name>
        <dbReference type="ChEBI" id="CHEBI:29108"/>
        <label>1</label>
    </ligand>
</feature>
<feature type="binding site" evidence="5 6 23 25 26 27">
    <location>
        <position position="550"/>
    </location>
    <ligand>
        <name>Ca(2+)</name>
        <dbReference type="ChEBI" id="CHEBI:29108"/>
        <label>4</label>
    </ligand>
</feature>
<feature type="binding site" evidence="5 6 23 25 26 27">
    <location>
        <position position="551"/>
    </location>
    <ligand>
        <name>Ca(2+)</name>
        <dbReference type="ChEBI" id="CHEBI:29108"/>
        <label>3</label>
    </ligand>
</feature>
<feature type="binding site" evidence="5 6 23 25 26 27">
    <location>
        <position position="552"/>
    </location>
    <ligand>
        <name>Ca(2+)</name>
        <dbReference type="ChEBI" id="CHEBI:29108"/>
        <label>3</label>
    </ligand>
</feature>
<feature type="binding site" evidence="5 6 23 25 26 27">
    <location>
        <position position="552"/>
    </location>
    <ligand>
        <name>Ca(2+)</name>
        <dbReference type="ChEBI" id="CHEBI:29108"/>
        <label>4</label>
    </ligand>
</feature>
<feature type="glycosylation site" description="N-linked (GlcNAc...) asparagine" evidence="2">
    <location>
        <position position="39"/>
    </location>
</feature>
<feature type="glycosylation site" description="N-linked (GlcNAc...) asparagine" evidence="2">
    <location>
        <position position="47"/>
    </location>
</feature>
<feature type="glycosylation site" description="N-linked (GlcNAc...) asparagine" evidence="2">
    <location>
        <position position="114"/>
    </location>
</feature>
<feature type="glycosylation site" description="N-linked (GlcNAc...) asparagine" evidence="2">
    <location>
        <position position="846"/>
    </location>
</feature>
<feature type="splice variant" id="VSP_062036" description="In isoform D." evidence="8 10">
    <original>DELAA</original>
    <variation>STHYP</variation>
    <location>
        <begin position="651"/>
        <end position="655"/>
    </location>
</feature>
<feature type="mutagenesis site" description="Disruption in the ability to maintain electric potential upon stimulation with light." evidence="3">
    <original>P</original>
    <variation>L</variation>
    <location>
        <position position="193"/>
    </location>
</feature>
<feature type="mutagenesis site" description="Disruption in the ability to maintain electric potential upon stimulation with light." evidence="3">
    <original>S</original>
    <variation>P</variation>
    <location>
        <position position="198"/>
    </location>
</feature>
<feature type="mutagenesis site" description="Significant to dramatic reduction in inhibitory potency of cytoplasmic Ca(2+), probably due to a central role in coordinating the binding of Ca(2+) ligands." evidence="5">
    <original>E</original>
    <variation>A</variation>
    <variation>D</variation>
    <location>
        <position position="455"/>
    </location>
</feature>
<feature type="mutagenesis site" description="Perturbation of binding cooperativity of the four Ca(2+) ligands, probably due to disruption of the interaction interface between Calx-beta domain 1 and Calx-beta domain 2." evidence="6">
    <original>F</original>
    <variation>A</variation>
    <location>
        <position position="519"/>
    </location>
</feature>
<feature type="mutagenesis site" description="Slight reduction in inhibitory potency of cytoplasmic Ca(2+)." evidence="5">
    <original>E</original>
    <variation>A</variation>
    <location>
        <position position="520"/>
    </location>
</feature>
<feature type="mutagenesis site" description="No effect on Ca(2+) binding kinetics." evidence="6">
    <original>H</original>
    <variation>P</variation>
    <location>
        <position position="553"/>
    </location>
</feature>
<feature type="mutagenesis site" description="Perturbation of binding cooperativity of the four Ca(2+) ligands and significantly reduced Ca(2+) affinity, probably due to altered domain orientation and disruption of the interaction interface between Calx-beta domain 1 and Calx-beta domain 2." evidence="6">
    <original>G</original>
    <variation>P</variation>
    <location>
        <position position="555"/>
    </location>
</feature>
<feature type="mutagenesis site" description="No effect on Ca(2+) binding kinetics." evidence="6">
    <original>R</original>
    <variation>A</variation>
    <location>
        <position position="584"/>
    </location>
</feature>
<feature type="mutagenesis site" description="Perturbation of binding cooperativity of the four Ca(2+) ligands, probably due to disruption of the interaction interface between Calx-beta domain 1 and Calx-beta domain 2." evidence="6">
    <original>I</original>
    <variation>Y</variation>
    <location>
        <position position="674"/>
    </location>
</feature>
<feature type="mutagenesis site" description="Perturbation of binding cooperativity of the four Ca(2+) ligands, probably due to disruption of the interaction interface between Calx-beta domain 1 and Calx-beta domain 2." evidence="6">
    <original>S</original>
    <variation>Y</variation>
    <location>
        <position position="678"/>
    </location>
</feature>
<feature type="mutagenesis site" description="Disruption in the ability to maintain electric potential upon stimulation with light." evidence="3">
    <original>G</original>
    <variation>D</variation>
    <location>
        <position position="803"/>
    </location>
</feature>
<feature type="mutagenesis site" description="Disruption in the ability to maintain electric potential upon stimulation with light." evidence="3">
    <original>T</original>
    <variation>I</variation>
    <location>
        <position position="822"/>
    </location>
</feature>
<feature type="sequence conflict" description="In Ref. 2; AAB50166." evidence="16" ref="2">
    <original>E</original>
    <variation>G</variation>
    <location>
        <position position="652"/>
    </location>
</feature>
<feature type="strand" evidence="29">
    <location>
        <begin position="444"/>
        <end position="454"/>
    </location>
</feature>
<feature type="strand" evidence="29">
    <location>
        <begin position="464"/>
        <end position="466"/>
    </location>
</feature>
<feature type="strand" evidence="29">
    <location>
        <begin position="474"/>
        <end position="485"/>
    </location>
</feature>
<feature type="turn" evidence="29">
    <location>
        <begin position="488"/>
        <end position="490"/>
    </location>
</feature>
<feature type="strand" evidence="29">
    <location>
        <begin position="495"/>
        <end position="500"/>
    </location>
</feature>
<feature type="strand" evidence="30">
    <location>
        <begin position="506"/>
        <end position="508"/>
    </location>
</feature>
<feature type="strand" evidence="30">
    <location>
        <begin position="511"/>
        <end position="513"/>
    </location>
</feature>
<feature type="strand" evidence="29">
    <location>
        <begin position="523"/>
        <end position="530"/>
    </location>
</feature>
<feature type="strand" evidence="29">
    <location>
        <begin position="542"/>
        <end position="549"/>
    </location>
</feature>
<feature type="strand" evidence="29">
    <location>
        <begin position="556"/>
        <end position="558"/>
    </location>
</feature>
<feature type="strand" evidence="29">
    <location>
        <begin position="562"/>
        <end position="566"/>
    </location>
</feature>
<feature type="strand" evidence="30">
    <location>
        <begin position="568"/>
        <end position="570"/>
    </location>
</feature>
<feature type="strand" evidence="29">
    <location>
        <begin position="573"/>
        <end position="581"/>
    </location>
</feature>
<feature type="strand" evidence="29">
    <location>
        <begin position="587"/>
        <end position="600"/>
    </location>
</feature>
<feature type="strand" evidence="29">
    <location>
        <begin position="608"/>
        <end position="613"/>
    </location>
</feature>
<feature type="strand" evidence="29">
    <location>
        <begin position="619"/>
        <end position="624"/>
    </location>
</feature>
<feature type="strand" evidence="29">
    <location>
        <begin position="636"/>
        <end position="642"/>
    </location>
</feature>
<feature type="helix" evidence="29">
    <location>
        <begin position="652"/>
        <end position="660"/>
    </location>
</feature>
<feature type="turn" evidence="29">
    <location>
        <begin position="665"/>
        <end position="667"/>
    </location>
</feature>
<feature type="helix" evidence="29">
    <location>
        <begin position="670"/>
        <end position="676"/>
    </location>
</feature>
<feature type="strand" evidence="29">
    <location>
        <begin position="687"/>
        <end position="692"/>
    </location>
</feature>
<feature type="helix" evidence="28">
    <location>
        <begin position="699"/>
        <end position="707"/>
    </location>
</feature>
<protein>
    <recommendedName>
        <fullName evidence="16">Sodium/calcium exchanger Calx</fullName>
    </recommendedName>
    <alternativeName>
        <fullName evidence="17">Na/Ca-exchange protein</fullName>
    </alternativeName>
</protein>
<accession>Q9VDG5</accession>
<accession>A0A0B4K6R7</accession>
<accession>Q24413</accession>
<proteinExistence type="evidence at protein level"/>
<reference evidence="17" key="1">
    <citation type="journal article" date="1996" name="Ann. N. Y. Acad. Sci.">
        <title>Alternative splicing of the Na(+)-Ca2+ exchanger gene, NCX1.</title>
        <authorList>
            <person name="Schulze D.H."/>
            <person name="Kofuji P."/>
            <person name="Valdivia C."/>
            <person name="He S."/>
            <person name="Luo S."/>
            <person name="Ruknudin A."/>
            <person name="Wisel S."/>
            <person name="Kirby M.S."/>
            <person name="duBell W."/>
            <person name="Lederer W.J."/>
        </authorList>
    </citation>
    <scope>NUCLEOTIDE SEQUENCE [GENOMIC DNA]</scope>
</reference>
<reference evidence="17" key="2">
    <citation type="journal article" date="1997" name="Am. J. Physiol.">
        <title>Na+/Ca2+ exchanger in Drosophila: cloning, expression, and transport differences.</title>
        <authorList>
            <person name="Ruknudin A."/>
            <person name="Valdivia C."/>
            <person name="Kofuji P."/>
            <person name="Lederer W.J."/>
            <person name="Schulze D.H."/>
        </authorList>
    </citation>
    <scope>NUCLEOTIDE SEQUENCE [GENOMIC DNA]</scope>
    <scope>FUNCTION</scope>
    <scope>CATALYTIC ACTIVITY</scope>
    <scope>ALTERNATIVE SPLICING (ISOFORMS A AND D)</scope>
</reference>
<reference evidence="22" key="3">
    <citation type="journal article" date="2000" name="Science">
        <title>The genome sequence of Drosophila melanogaster.</title>
        <authorList>
            <person name="Adams M.D."/>
            <person name="Celniker S.E."/>
            <person name="Holt R.A."/>
            <person name="Evans C.A."/>
            <person name="Gocayne J.D."/>
            <person name="Amanatides P.G."/>
            <person name="Scherer S.E."/>
            <person name="Li P.W."/>
            <person name="Hoskins R.A."/>
            <person name="Galle R.F."/>
            <person name="George R.A."/>
            <person name="Lewis S.E."/>
            <person name="Richards S."/>
            <person name="Ashburner M."/>
            <person name="Henderson S.N."/>
            <person name="Sutton G.G."/>
            <person name="Wortman J.R."/>
            <person name="Yandell M.D."/>
            <person name="Zhang Q."/>
            <person name="Chen L.X."/>
            <person name="Brandon R.C."/>
            <person name="Rogers Y.-H.C."/>
            <person name="Blazej R.G."/>
            <person name="Champe M."/>
            <person name="Pfeiffer B.D."/>
            <person name="Wan K.H."/>
            <person name="Doyle C."/>
            <person name="Baxter E.G."/>
            <person name="Helt G."/>
            <person name="Nelson C.R."/>
            <person name="Miklos G.L.G."/>
            <person name="Abril J.F."/>
            <person name="Agbayani A."/>
            <person name="An H.-J."/>
            <person name="Andrews-Pfannkoch C."/>
            <person name="Baldwin D."/>
            <person name="Ballew R.M."/>
            <person name="Basu A."/>
            <person name="Baxendale J."/>
            <person name="Bayraktaroglu L."/>
            <person name="Beasley E.M."/>
            <person name="Beeson K.Y."/>
            <person name="Benos P.V."/>
            <person name="Berman B.P."/>
            <person name="Bhandari D."/>
            <person name="Bolshakov S."/>
            <person name="Borkova D."/>
            <person name="Botchan M.R."/>
            <person name="Bouck J."/>
            <person name="Brokstein P."/>
            <person name="Brottier P."/>
            <person name="Burtis K.C."/>
            <person name="Busam D.A."/>
            <person name="Butler H."/>
            <person name="Cadieu E."/>
            <person name="Center A."/>
            <person name="Chandra I."/>
            <person name="Cherry J.M."/>
            <person name="Cawley S."/>
            <person name="Dahlke C."/>
            <person name="Davenport L.B."/>
            <person name="Davies P."/>
            <person name="de Pablos B."/>
            <person name="Delcher A."/>
            <person name="Deng Z."/>
            <person name="Mays A.D."/>
            <person name="Dew I."/>
            <person name="Dietz S.M."/>
            <person name="Dodson K."/>
            <person name="Doup L.E."/>
            <person name="Downes M."/>
            <person name="Dugan-Rocha S."/>
            <person name="Dunkov B.C."/>
            <person name="Dunn P."/>
            <person name="Durbin K.J."/>
            <person name="Evangelista C.C."/>
            <person name="Ferraz C."/>
            <person name="Ferriera S."/>
            <person name="Fleischmann W."/>
            <person name="Fosler C."/>
            <person name="Gabrielian A.E."/>
            <person name="Garg N.S."/>
            <person name="Gelbart W.M."/>
            <person name="Glasser K."/>
            <person name="Glodek A."/>
            <person name="Gong F."/>
            <person name="Gorrell J.H."/>
            <person name="Gu Z."/>
            <person name="Guan P."/>
            <person name="Harris M."/>
            <person name="Harris N.L."/>
            <person name="Harvey D.A."/>
            <person name="Heiman T.J."/>
            <person name="Hernandez J.R."/>
            <person name="Houck J."/>
            <person name="Hostin D."/>
            <person name="Houston K.A."/>
            <person name="Howland T.J."/>
            <person name="Wei M.-H."/>
            <person name="Ibegwam C."/>
            <person name="Jalali M."/>
            <person name="Kalush F."/>
            <person name="Karpen G.H."/>
            <person name="Ke Z."/>
            <person name="Kennison J.A."/>
            <person name="Ketchum K.A."/>
            <person name="Kimmel B.E."/>
            <person name="Kodira C.D."/>
            <person name="Kraft C.L."/>
            <person name="Kravitz S."/>
            <person name="Kulp D."/>
            <person name="Lai Z."/>
            <person name="Lasko P."/>
            <person name="Lei Y."/>
            <person name="Levitsky A.A."/>
            <person name="Li J.H."/>
            <person name="Li Z."/>
            <person name="Liang Y."/>
            <person name="Lin X."/>
            <person name="Liu X."/>
            <person name="Mattei B."/>
            <person name="McIntosh T.C."/>
            <person name="McLeod M.P."/>
            <person name="McPherson D."/>
            <person name="Merkulov G."/>
            <person name="Milshina N.V."/>
            <person name="Mobarry C."/>
            <person name="Morris J."/>
            <person name="Moshrefi A."/>
            <person name="Mount S.M."/>
            <person name="Moy M."/>
            <person name="Murphy B."/>
            <person name="Murphy L."/>
            <person name="Muzny D.M."/>
            <person name="Nelson D.L."/>
            <person name="Nelson D.R."/>
            <person name="Nelson K.A."/>
            <person name="Nixon K."/>
            <person name="Nusskern D.R."/>
            <person name="Pacleb J.M."/>
            <person name="Palazzolo M."/>
            <person name="Pittman G.S."/>
            <person name="Pan S."/>
            <person name="Pollard J."/>
            <person name="Puri V."/>
            <person name="Reese M.G."/>
            <person name="Reinert K."/>
            <person name="Remington K."/>
            <person name="Saunders R.D.C."/>
            <person name="Scheeler F."/>
            <person name="Shen H."/>
            <person name="Shue B.C."/>
            <person name="Siden-Kiamos I."/>
            <person name="Simpson M."/>
            <person name="Skupski M.P."/>
            <person name="Smith T.J."/>
            <person name="Spier E."/>
            <person name="Spradling A.C."/>
            <person name="Stapleton M."/>
            <person name="Strong R."/>
            <person name="Sun E."/>
            <person name="Svirskas R."/>
            <person name="Tector C."/>
            <person name="Turner R."/>
            <person name="Venter E."/>
            <person name="Wang A.H."/>
            <person name="Wang X."/>
            <person name="Wang Z.-Y."/>
            <person name="Wassarman D.A."/>
            <person name="Weinstock G.M."/>
            <person name="Weissenbach J."/>
            <person name="Williams S.M."/>
            <person name="Woodage T."/>
            <person name="Worley K.C."/>
            <person name="Wu D."/>
            <person name="Yang S."/>
            <person name="Yao Q.A."/>
            <person name="Ye J."/>
            <person name="Yeh R.-F."/>
            <person name="Zaveri J.S."/>
            <person name="Zhan M."/>
            <person name="Zhang G."/>
            <person name="Zhao Q."/>
            <person name="Zheng L."/>
            <person name="Zheng X.H."/>
            <person name="Zhong F.N."/>
            <person name="Zhong W."/>
            <person name="Zhou X."/>
            <person name="Zhu S.C."/>
            <person name="Zhu X."/>
            <person name="Smith H.O."/>
            <person name="Gibbs R.A."/>
            <person name="Myers E.W."/>
            <person name="Rubin G.M."/>
            <person name="Venter J.C."/>
        </authorList>
    </citation>
    <scope>NUCLEOTIDE SEQUENCE [LARGE SCALE GENOMIC DNA]</scope>
    <source>
        <strain evidence="22">Berkeley</strain>
    </source>
</reference>
<reference evidence="22" key="4">
    <citation type="journal article" date="2002" name="Genome Biol.">
        <title>Annotation of the Drosophila melanogaster euchromatic genome: a systematic review.</title>
        <authorList>
            <person name="Misra S."/>
            <person name="Crosby M.A."/>
            <person name="Mungall C.J."/>
            <person name="Matthews B.B."/>
            <person name="Campbell K.S."/>
            <person name="Hradecky P."/>
            <person name="Huang Y."/>
            <person name="Kaminker J.S."/>
            <person name="Millburn G.H."/>
            <person name="Prochnik S.E."/>
            <person name="Smith C.D."/>
            <person name="Tupy J.L."/>
            <person name="Whitfield E.J."/>
            <person name="Bayraktaroglu L."/>
            <person name="Berman B.P."/>
            <person name="Bettencourt B.R."/>
            <person name="Celniker S.E."/>
            <person name="de Grey A.D.N.J."/>
            <person name="Drysdale R.A."/>
            <person name="Harris N.L."/>
            <person name="Richter J."/>
            <person name="Russo S."/>
            <person name="Schroeder A.J."/>
            <person name="Shu S.Q."/>
            <person name="Stapleton M."/>
            <person name="Yamada C."/>
            <person name="Ashburner M."/>
            <person name="Gelbart W.M."/>
            <person name="Rubin G.M."/>
            <person name="Lewis S.E."/>
        </authorList>
    </citation>
    <scope>GENOME REANNOTATION</scope>
    <source>
        <strain evidence="22">Berkeley</strain>
    </source>
</reference>
<reference evidence="19" key="5">
    <citation type="journal article" date="2002" name="Genome Biol.">
        <title>A Drosophila full-length cDNA resource.</title>
        <authorList>
            <person name="Stapleton M."/>
            <person name="Carlson J.W."/>
            <person name="Brokstein P."/>
            <person name="Yu C."/>
            <person name="Champe M."/>
            <person name="George R.A."/>
            <person name="Guarin H."/>
            <person name="Kronmiller B."/>
            <person name="Pacleb J.M."/>
            <person name="Park S."/>
            <person name="Wan K.H."/>
            <person name="Rubin G.M."/>
            <person name="Celniker S.E."/>
        </authorList>
    </citation>
    <scope>NUCLEOTIDE SEQUENCE [LARGE SCALE MRNA] (ISOFORM D)</scope>
    <source>
        <strain evidence="19">Berkeley</strain>
        <tissue evidence="19">Testis</tissue>
    </source>
</reference>
<reference evidence="20" key="6">
    <citation type="submission" date="2004-01" db="EMBL/GenBank/DDBJ databases">
        <authorList>
            <person name="Nagase T."/>
            <person name="Ishikawa K."/>
            <person name="Miyajima N."/>
            <person name="Tanaka A."/>
            <person name="Kotani H."/>
            <person name="Nomura N."/>
            <person name="Ohara O."/>
        </authorList>
    </citation>
    <scope>NUCLEOTIDE SEQUENCE [LARGE SCALE MRNA] (ISOFORM A)</scope>
    <source>
        <strain evidence="20">Berkeley</strain>
        <tissue evidence="20">Testis</tissue>
    </source>
</reference>
<reference evidence="16" key="7">
    <citation type="journal article" date="1996" name="J. Gen. Physiol.">
        <title>Anomalous regulation of the Drosophila Na(+)-Ca2+ exchanger by Ca2+.</title>
        <authorList>
            <person name="Hryshko L.V."/>
            <person name="Matsuoka S."/>
            <person name="Nicoll D.A."/>
            <person name="Weiss J.N."/>
            <person name="Schwarz E.M."/>
            <person name="Benzer S."/>
            <person name="Philipson K.D."/>
        </authorList>
    </citation>
    <scope>FUNCTION</scope>
    <scope>CATALYTIC ACTIVITY</scope>
    <scope>ACTIVITY REGULATION BY SODIUM AND CALCIUM</scope>
    <scope>SUBCELLULAR LOCATION</scope>
</reference>
<reference evidence="16" key="8">
    <citation type="journal article" date="1997" name="Proc. Natl. Acad. Sci. U.S.A.">
        <title>Calx, a Na-Ca exchanger gene of Drosophila melanogaster.</title>
        <authorList>
            <person name="Schwarz E.M."/>
            <person name="Benzer S."/>
        </authorList>
    </citation>
    <scope>CATALYTIC ACTIVITY</scope>
    <scope>SUBCELLULAR LOCATION</scope>
    <scope>TISSUE SPECIFICITY</scope>
    <scope>DEVELOPMENTAL STAGE</scope>
</reference>
<reference evidence="16" key="9">
    <citation type="journal article" date="1998" name="J. Gen. Physiol.">
        <title>Functional differences in ionic regulation between alternatively spliced isoforms of the Na+-Ca2+ exchanger from Drosophila melanogaster.</title>
        <authorList>
            <person name="Omelchenko A."/>
            <person name="Dyck C."/>
            <person name="Hnatowich M."/>
            <person name="Buchko J."/>
            <person name="Nicoll D.A."/>
            <person name="Philipson K.D."/>
            <person name="Hryshko L.V."/>
        </authorList>
    </citation>
    <scope>ACTIVITY REGULATION BY SODIUM AND CALCIUM</scope>
    <scope>ALTERNATIVE SPLICING (ISOFORMS A AND D)</scope>
</reference>
<reference evidence="16" key="10">
    <citation type="journal article" date="2005" name="Neuron">
        <title>Light activation, adaptation, and cell survival functions of the Na+/Ca2+ exchanger CalX.</title>
        <authorList>
            <person name="Wang T."/>
            <person name="Xu H."/>
            <person name="Oberwinkler J."/>
            <person name="Gu Y."/>
            <person name="Hardie R.C."/>
            <person name="Montell C."/>
        </authorList>
    </citation>
    <scope>FUNCTION</scope>
    <scope>SUBCELLULAR LOCATION</scope>
    <scope>ALTERNATIVE SPLICING (ISOFORMS A AND D)</scope>
    <scope>TISSUE SPECIFICITY</scope>
    <scope>DEVELOPMENTAL STAGE</scope>
    <scope>MUTAGENESIS OF PRO-193; SER-198; GLY-803 AND THR-822</scope>
</reference>
<reference evidence="24" key="11">
    <citation type="journal article" date="2009" name="J. Mol. Biol.">
        <title>Crystal structure of CBD2 from the Drosophila Na(+)/Ca(2+) exchanger: diversity of Ca(2+) regulation and its alternative splicing modification.</title>
        <authorList>
            <person name="Wu M."/>
            <person name="Wang M."/>
            <person name="Nix J."/>
            <person name="Hryshko L.V."/>
            <person name="Zheng L."/>
        </authorList>
    </citation>
    <scope>X-RAY CRYSTALLOGRAPHY (2.50 ANGSTROMS) OF 555-709</scope>
    <scope>DOMAIN</scope>
</reference>
<reference evidence="23 25" key="12">
    <citation type="journal article" date="2010" name="J. Biol. Chem.">
        <title>Crystal structures of progressive Ca2+ binding states of the Ca2+ sensor Ca2+ binding domain 1 (CBD1) from the CALX Na+/Ca2+ exchanger reveal incremental conformational transitions.</title>
        <authorList>
            <person name="Wu M."/>
            <person name="Le H.D."/>
            <person name="Wang M."/>
            <person name="Yurkov V."/>
            <person name="Omelchenko A."/>
            <person name="Hnatowich M."/>
            <person name="Nix J."/>
            <person name="Hryshko L.V."/>
            <person name="Zheng L."/>
        </authorList>
    </citation>
    <scope>X-RAY CRYSTALLOGRAPHY (1.60 ANGSTROMS) OF 438-574 IN COMPLEX WITH CALCIUM</scope>
    <scope>ACTIVITY REGULATION BY SODIUM AND CALCIUM</scope>
    <scope>DOMAIN</scope>
    <scope>MUTAGENESIS OF GLU-455 AND GLU-520</scope>
</reference>
<reference evidence="26 27" key="13">
    <citation type="journal article" date="2011" name="Structure">
        <title>Structural basis of the Ca2+ inhibitory mechanism of Drosophila Na+/Ca2+ exchanger CALX and its modification by alternative splicing.</title>
        <authorList>
            <person name="Wu M."/>
            <person name="Tong S."/>
            <person name="Gonzalez J."/>
            <person name="Jayaraman V."/>
            <person name="Spudich J.L."/>
            <person name="Zheng L."/>
        </authorList>
    </citation>
    <scope>X-RAY CRYSTALLOGRAPHY (2.35 ANGSTROMS) OF 433-730 IN COMPLEX WITH CALCIUM</scope>
    <scope>DOMAIN</scope>
    <scope>MUTAGENESIS OF PHE-519; HIS-553; GLY-555; ARG-584; ILE-674 AND SER-678</scope>
</reference>
<gene>
    <name evidence="21" type="primary">Calx</name>
    <name evidence="18" type="synonym">9C5</name>
    <name evidence="18" type="synonym">anon-93ABa</name>
    <name evidence="21" type="synonym">NCX</name>
    <name evidence="21" type="ORF">CG5685</name>
</gene>